<sequence length="160" mass="18399">MGRDLGWCFFVATVLLAAVLLPAPTIAGRLELKNEISGVASVRKAKLAVRCWSNEDDLGWNMLKPKQSRIWKFTTMNMWPFQKTEFRCQFRSGFGTTNEDVVTVFSVKDGFRKQCGVGGDECFWVAKRDGFYLRRIVKDGGGDSRKKYVDVLKSKWVWKW</sequence>
<reference key="1">
    <citation type="journal article" date="2000" name="Nature">
        <title>Sequence and analysis of chromosome 5 of the plant Arabidopsis thaliana.</title>
        <authorList>
            <person name="Tabata S."/>
            <person name="Kaneko T."/>
            <person name="Nakamura Y."/>
            <person name="Kotani H."/>
            <person name="Kato T."/>
            <person name="Asamizu E."/>
            <person name="Miyajima N."/>
            <person name="Sasamoto S."/>
            <person name="Kimura T."/>
            <person name="Hosouchi T."/>
            <person name="Kawashima K."/>
            <person name="Kohara M."/>
            <person name="Matsumoto M."/>
            <person name="Matsuno A."/>
            <person name="Muraki A."/>
            <person name="Nakayama S."/>
            <person name="Nakazaki N."/>
            <person name="Naruo K."/>
            <person name="Okumura S."/>
            <person name="Shinpo S."/>
            <person name="Takeuchi C."/>
            <person name="Wada T."/>
            <person name="Watanabe A."/>
            <person name="Yamada M."/>
            <person name="Yasuda M."/>
            <person name="Sato S."/>
            <person name="de la Bastide M."/>
            <person name="Huang E."/>
            <person name="Spiegel L."/>
            <person name="Gnoj L."/>
            <person name="O'Shaughnessy A."/>
            <person name="Preston R."/>
            <person name="Habermann K."/>
            <person name="Murray J."/>
            <person name="Johnson D."/>
            <person name="Rohlfing T."/>
            <person name="Nelson J."/>
            <person name="Stoneking T."/>
            <person name="Pepin K."/>
            <person name="Spieth J."/>
            <person name="Sekhon M."/>
            <person name="Armstrong J."/>
            <person name="Becker M."/>
            <person name="Belter E."/>
            <person name="Cordum H."/>
            <person name="Cordes M."/>
            <person name="Courtney L."/>
            <person name="Courtney W."/>
            <person name="Dante M."/>
            <person name="Du H."/>
            <person name="Edwards J."/>
            <person name="Fryman J."/>
            <person name="Haakensen B."/>
            <person name="Lamar E."/>
            <person name="Latreille P."/>
            <person name="Leonard S."/>
            <person name="Meyer R."/>
            <person name="Mulvaney E."/>
            <person name="Ozersky P."/>
            <person name="Riley A."/>
            <person name="Strowmatt C."/>
            <person name="Wagner-McPherson C."/>
            <person name="Wollam A."/>
            <person name="Yoakum M."/>
            <person name="Bell M."/>
            <person name="Dedhia N."/>
            <person name="Parnell L."/>
            <person name="Shah R."/>
            <person name="Rodriguez M."/>
            <person name="Hoon See L."/>
            <person name="Vil D."/>
            <person name="Baker J."/>
            <person name="Kirchoff K."/>
            <person name="Toth K."/>
            <person name="King L."/>
            <person name="Bahret A."/>
            <person name="Miller B."/>
            <person name="Marra M.A."/>
            <person name="Martienssen R."/>
            <person name="McCombie W.R."/>
            <person name="Wilson R.K."/>
            <person name="Murphy G."/>
            <person name="Bancroft I."/>
            <person name="Volckaert G."/>
            <person name="Wambutt R."/>
            <person name="Duesterhoeft A."/>
            <person name="Stiekema W."/>
            <person name="Pohl T."/>
            <person name="Entian K.-D."/>
            <person name="Terryn N."/>
            <person name="Hartley N."/>
            <person name="Bent E."/>
            <person name="Johnson S."/>
            <person name="Langham S.-A."/>
            <person name="McCullagh B."/>
            <person name="Robben J."/>
            <person name="Grymonprez B."/>
            <person name="Zimmermann W."/>
            <person name="Ramsperger U."/>
            <person name="Wedler H."/>
            <person name="Balke K."/>
            <person name="Wedler E."/>
            <person name="Peters S."/>
            <person name="van Staveren M."/>
            <person name="Dirkse W."/>
            <person name="Mooijman P."/>
            <person name="Klein Lankhorst R."/>
            <person name="Weitzenegger T."/>
            <person name="Bothe G."/>
            <person name="Rose M."/>
            <person name="Hauf J."/>
            <person name="Berneiser S."/>
            <person name="Hempel S."/>
            <person name="Feldpausch M."/>
            <person name="Lamberth S."/>
            <person name="Villarroel R."/>
            <person name="Gielen J."/>
            <person name="Ardiles W."/>
            <person name="Bents O."/>
            <person name="Lemcke K."/>
            <person name="Kolesov G."/>
            <person name="Mayer K.F.X."/>
            <person name="Rudd S."/>
            <person name="Schoof H."/>
            <person name="Schueller C."/>
            <person name="Zaccaria P."/>
            <person name="Mewes H.-W."/>
            <person name="Bevan M."/>
            <person name="Fransz P.F."/>
        </authorList>
    </citation>
    <scope>NUCLEOTIDE SEQUENCE [LARGE SCALE GENOMIC DNA]</scope>
    <source>
        <strain>cv. Columbia</strain>
    </source>
</reference>
<reference key="2">
    <citation type="journal article" date="2017" name="Plant J.">
        <title>Araport11: a complete reannotation of the Arabidopsis thaliana reference genome.</title>
        <authorList>
            <person name="Cheng C.Y."/>
            <person name="Krishnakumar V."/>
            <person name="Chan A.P."/>
            <person name="Thibaud-Nissen F."/>
            <person name="Schobel S."/>
            <person name="Town C.D."/>
        </authorList>
    </citation>
    <scope>GENOME REANNOTATION</scope>
    <source>
        <strain>cv. Columbia</strain>
    </source>
</reference>
<reference key="3">
    <citation type="submission" date="2005-03" db="EMBL/GenBank/DDBJ databases">
        <authorList>
            <person name="Underwood B.A."/>
            <person name="Xiao Y.-L."/>
            <person name="Moskal W.A. Jr."/>
            <person name="Monaghan E.L."/>
            <person name="Wang W."/>
            <person name="Redman J.C."/>
            <person name="Wu H.C."/>
            <person name="Utterback T."/>
            <person name="Town C.D."/>
        </authorList>
    </citation>
    <scope>NUCLEOTIDE SEQUENCE [LARGE SCALE GENOMIC DNA]</scope>
    <source>
        <strain>cv. Columbia</strain>
    </source>
</reference>
<reference key="4">
    <citation type="journal article" date="2002" name="Plant Physiol.">
        <title>Cloning and sequencing of cDNAs for hypothetical genes from chromosome 2 of Arabidopsis.</title>
        <authorList>
            <person name="Xiao Y.-L."/>
            <person name="Malik M."/>
            <person name="Whitelaw C.A."/>
            <person name="Town C.D."/>
        </authorList>
    </citation>
    <scope>NUCLEOTIDE SEQUENCE [LARGE SCALE MRNA]</scope>
    <source>
        <strain>cv. Columbia</strain>
    </source>
</reference>
<reference key="5">
    <citation type="journal article" date="1999" name="Plant Mol. Biol.">
        <title>Analysis of Arabidopsis genome sequence reveals a large new gene family in plants.</title>
        <authorList>
            <person name="Ride J.P."/>
            <person name="Davies E.M."/>
            <person name="Franklin F.C.H."/>
            <person name="Marshall D.F."/>
        </authorList>
    </citation>
    <scope>GENE FAMILY</scope>
    <scope>NOMENCLATURE</scope>
    <source>
        <strain>cv. Columbia</strain>
    </source>
</reference>
<name>SPH13_ARATH</name>
<gene>
    <name evidence="2" type="primary">SPH13</name>
    <name evidence="5" type="ordered locus">At5g26050</name>
    <name evidence="6" type="ORF">T1N24.10</name>
</gene>
<dbReference type="EMBL" id="AF149413">
    <property type="protein sequence ID" value="AAD40130.1"/>
    <property type="status" value="ALT_SEQ"/>
    <property type="molecule type" value="Genomic_DNA"/>
</dbReference>
<dbReference type="EMBL" id="CP002688">
    <property type="protein sequence ID" value="AED93518.1"/>
    <property type="molecule type" value="Genomic_DNA"/>
</dbReference>
<dbReference type="EMBL" id="AY954868">
    <property type="protein sequence ID" value="AAX55194.1"/>
    <property type="molecule type" value="Genomic_DNA"/>
</dbReference>
<dbReference type="EMBL" id="AY735689">
    <property type="protein sequence ID" value="AAU44559.1"/>
    <property type="molecule type" value="mRNA"/>
</dbReference>
<dbReference type="RefSeq" id="NP_197977.1">
    <property type="nucleotide sequence ID" value="NM_122506.2"/>
</dbReference>
<dbReference type="STRING" id="3702.Q5XV33"/>
<dbReference type="PaxDb" id="3702-AT5G26050.1"/>
<dbReference type="EnsemblPlants" id="AT5G26050.1">
    <property type="protein sequence ID" value="AT5G26050.1"/>
    <property type="gene ID" value="AT5G26050"/>
</dbReference>
<dbReference type="GeneID" id="832674"/>
<dbReference type="Gramene" id="AT5G26050.1">
    <property type="protein sequence ID" value="AT5G26050.1"/>
    <property type="gene ID" value="AT5G26050"/>
</dbReference>
<dbReference type="KEGG" id="ath:AT5G26050"/>
<dbReference type="Araport" id="AT5G26050"/>
<dbReference type="TAIR" id="AT5G26050"/>
<dbReference type="eggNOG" id="ENOG502R1HC">
    <property type="taxonomic scope" value="Eukaryota"/>
</dbReference>
<dbReference type="HOGENOM" id="CLU_1654536_0_0_1"/>
<dbReference type="InParanoid" id="Q5XV33"/>
<dbReference type="OMA" id="GFYQRRI"/>
<dbReference type="PhylomeDB" id="Q5XV33"/>
<dbReference type="PRO" id="PR:Q5XV33"/>
<dbReference type="Proteomes" id="UP000006548">
    <property type="component" value="Chromosome 5"/>
</dbReference>
<dbReference type="ExpressionAtlas" id="Q5XV33">
    <property type="expression patterns" value="baseline"/>
</dbReference>
<dbReference type="GO" id="GO:0005576">
    <property type="term" value="C:extracellular region"/>
    <property type="evidence" value="ECO:0007669"/>
    <property type="project" value="UniProtKB-SubCell"/>
</dbReference>
<dbReference type="GO" id="GO:0060320">
    <property type="term" value="P:rejection of self pollen"/>
    <property type="evidence" value="ECO:0007669"/>
    <property type="project" value="UniProtKB-KW"/>
</dbReference>
<dbReference type="InterPro" id="IPR010264">
    <property type="entry name" value="Self-incomp_S1"/>
</dbReference>
<dbReference type="PANTHER" id="PTHR31232">
    <property type="match status" value="1"/>
</dbReference>
<dbReference type="PANTHER" id="PTHR31232:SF29">
    <property type="entry name" value="S-PROTEIN HOMOLOG 13"/>
    <property type="match status" value="1"/>
</dbReference>
<dbReference type="Pfam" id="PF05938">
    <property type="entry name" value="Self-incomp_S1"/>
    <property type="match status" value="1"/>
</dbReference>
<protein>
    <recommendedName>
        <fullName evidence="2">S-protein homolog 13</fullName>
    </recommendedName>
</protein>
<accession>Q5XV33</accession>
<accession>Q9XH01</accession>
<proteinExistence type="evidence at transcript level"/>
<feature type="signal peptide" evidence="1">
    <location>
        <begin position="1"/>
        <end position="27"/>
    </location>
</feature>
<feature type="chain" id="PRO_5009344327" description="S-protein homolog 13">
    <location>
        <begin position="28"/>
        <end position="160"/>
    </location>
</feature>
<organism>
    <name type="scientific">Arabidopsis thaliana</name>
    <name type="common">Mouse-ear cress</name>
    <dbReference type="NCBI Taxonomy" id="3702"/>
    <lineage>
        <taxon>Eukaryota</taxon>
        <taxon>Viridiplantae</taxon>
        <taxon>Streptophyta</taxon>
        <taxon>Embryophyta</taxon>
        <taxon>Tracheophyta</taxon>
        <taxon>Spermatophyta</taxon>
        <taxon>Magnoliopsida</taxon>
        <taxon>eudicotyledons</taxon>
        <taxon>Gunneridae</taxon>
        <taxon>Pentapetalae</taxon>
        <taxon>rosids</taxon>
        <taxon>malvids</taxon>
        <taxon>Brassicales</taxon>
        <taxon>Brassicaceae</taxon>
        <taxon>Camelineae</taxon>
        <taxon>Arabidopsis</taxon>
    </lineage>
</organism>
<comment type="subcellular location">
    <subcellularLocation>
        <location evidence="4">Secreted</location>
    </subcellularLocation>
</comment>
<comment type="similarity">
    <text evidence="3">Belongs to the plant self-incompatibility (S1) protein family.</text>
</comment>
<comment type="sequence caution" evidence="3">
    <conflict type="erroneous gene model prediction">
        <sequence resource="EMBL-CDS" id="AAD40130"/>
    </conflict>
</comment>
<evidence type="ECO:0000255" key="1"/>
<evidence type="ECO:0000303" key="2">
    <source>
    </source>
</evidence>
<evidence type="ECO:0000305" key="3"/>
<evidence type="ECO:0000305" key="4">
    <source>
    </source>
</evidence>
<evidence type="ECO:0000312" key="5">
    <source>
        <dbReference type="Araport" id="AT5G26050"/>
    </source>
</evidence>
<evidence type="ECO:0000312" key="6">
    <source>
        <dbReference type="EMBL" id="AAD40130.1"/>
    </source>
</evidence>
<keyword id="KW-1185">Reference proteome</keyword>
<keyword id="KW-0964">Secreted</keyword>
<keyword id="KW-0713">Self-incompatibility</keyword>
<keyword id="KW-0732">Signal</keyword>